<feature type="chain" id="PRO_0000228895" description="Small ribosomal subunit protein uS4">
    <location>
        <begin position="1"/>
        <end position="208"/>
    </location>
</feature>
<feature type="domain" description="S4 RNA-binding" evidence="1">
    <location>
        <begin position="98"/>
        <end position="158"/>
    </location>
</feature>
<keyword id="KW-1185">Reference proteome</keyword>
<keyword id="KW-0687">Ribonucleoprotein</keyword>
<keyword id="KW-0689">Ribosomal protein</keyword>
<keyword id="KW-0694">RNA-binding</keyword>
<keyword id="KW-0699">rRNA-binding</keyword>
<gene>
    <name evidence="1" type="primary">rpsD</name>
    <name type="ordered locus">Gmet_0652</name>
</gene>
<organism>
    <name type="scientific">Geobacter metallireducens (strain ATCC 53774 / DSM 7210 / GS-15)</name>
    <dbReference type="NCBI Taxonomy" id="269799"/>
    <lineage>
        <taxon>Bacteria</taxon>
        <taxon>Pseudomonadati</taxon>
        <taxon>Thermodesulfobacteriota</taxon>
        <taxon>Desulfuromonadia</taxon>
        <taxon>Geobacterales</taxon>
        <taxon>Geobacteraceae</taxon>
        <taxon>Geobacter</taxon>
    </lineage>
</organism>
<proteinExistence type="inferred from homology"/>
<name>RS4_GEOMG</name>
<comment type="function">
    <text evidence="1">One of the primary rRNA binding proteins, it binds directly to 16S rRNA where it nucleates assembly of the body of the 30S subunit.</text>
</comment>
<comment type="function">
    <text evidence="1">With S5 and S12 plays an important role in translational accuracy.</text>
</comment>
<comment type="subunit">
    <text evidence="1">Part of the 30S ribosomal subunit. Contacts protein S5. The interaction surface between S4 and S5 is involved in control of translational fidelity.</text>
</comment>
<comment type="similarity">
    <text evidence="1">Belongs to the universal ribosomal protein uS4 family.</text>
</comment>
<evidence type="ECO:0000255" key="1">
    <source>
        <dbReference type="HAMAP-Rule" id="MF_01306"/>
    </source>
</evidence>
<evidence type="ECO:0000305" key="2"/>
<reference key="1">
    <citation type="journal article" date="2009" name="BMC Microbiol.">
        <title>The genome sequence of Geobacter metallireducens: features of metabolism, physiology and regulation common and dissimilar to Geobacter sulfurreducens.</title>
        <authorList>
            <person name="Aklujkar M."/>
            <person name="Krushkal J."/>
            <person name="DiBartolo G."/>
            <person name="Lapidus A."/>
            <person name="Land M.L."/>
            <person name="Lovley D.R."/>
        </authorList>
    </citation>
    <scope>NUCLEOTIDE SEQUENCE [LARGE SCALE GENOMIC DNA]</scope>
    <source>
        <strain>ATCC 53774 / DSM 7210 / GS-15</strain>
    </source>
</reference>
<sequence>MARYTGPSCRLCRRENMELFLKGERCYTDKCAIKRRNYPPGQHGQGRPKVSNYGIQLREKQKVRRIYGVLEKQFRSYFEEADRMRGVTGENLLSLLERRLDNVVYRLGFASSRTEARILVRHNHFTLNGRKANIPSIQLKAGDVVVLKEKSRKIACINESLDAVVRRGTPQWLELDKEGYKGVVKLLPAREDIAMPIQEQLIVELYSK</sequence>
<protein>
    <recommendedName>
        <fullName evidence="1">Small ribosomal subunit protein uS4</fullName>
    </recommendedName>
    <alternativeName>
        <fullName evidence="2">30S ribosomal protein S4</fullName>
    </alternativeName>
</protein>
<accession>Q39XY0</accession>
<dbReference type="EMBL" id="CP000148">
    <property type="protein sequence ID" value="ABB30894.1"/>
    <property type="molecule type" value="Genomic_DNA"/>
</dbReference>
<dbReference type="RefSeq" id="WP_011365706.1">
    <property type="nucleotide sequence ID" value="NC_007517.1"/>
</dbReference>
<dbReference type="SMR" id="Q39XY0"/>
<dbReference type="STRING" id="269799.Gmet_0652"/>
<dbReference type="KEGG" id="gme:Gmet_0652"/>
<dbReference type="eggNOG" id="COG0522">
    <property type="taxonomic scope" value="Bacteria"/>
</dbReference>
<dbReference type="HOGENOM" id="CLU_092403_0_2_7"/>
<dbReference type="Proteomes" id="UP000007073">
    <property type="component" value="Chromosome"/>
</dbReference>
<dbReference type="GO" id="GO:0015935">
    <property type="term" value="C:small ribosomal subunit"/>
    <property type="evidence" value="ECO:0007669"/>
    <property type="project" value="InterPro"/>
</dbReference>
<dbReference type="GO" id="GO:0019843">
    <property type="term" value="F:rRNA binding"/>
    <property type="evidence" value="ECO:0007669"/>
    <property type="project" value="UniProtKB-UniRule"/>
</dbReference>
<dbReference type="GO" id="GO:0003735">
    <property type="term" value="F:structural constituent of ribosome"/>
    <property type="evidence" value="ECO:0007669"/>
    <property type="project" value="InterPro"/>
</dbReference>
<dbReference type="GO" id="GO:0042274">
    <property type="term" value="P:ribosomal small subunit biogenesis"/>
    <property type="evidence" value="ECO:0007669"/>
    <property type="project" value="TreeGrafter"/>
</dbReference>
<dbReference type="GO" id="GO:0006412">
    <property type="term" value="P:translation"/>
    <property type="evidence" value="ECO:0007669"/>
    <property type="project" value="UniProtKB-UniRule"/>
</dbReference>
<dbReference type="CDD" id="cd00165">
    <property type="entry name" value="S4"/>
    <property type="match status" value="1"/>
</dbReference>
<dbReference type="FunFam" id="1.10.1050.10:FF:000001">
    <property type="entry name" value="30S ribosomal protein S4"/>
    <property type="match status" value="1"/>
</dbReference>
<dbReference type="FunFam" id="3.10.290.10:FF:000001">
    <property type="entry name" value="30S ribosomal protein S4"/>
    <property type="match status" value="1"/>
</dbReference>
<dbReference type="Gene3D" id="1.10.1050.10">
    <property type="entry name" value="Ribosomal Protein S4 Delta 41, Chain A, domain 1"/>
    <property type="match status" value="1"/>
</dbReference>
<dbReference type="Gene3D" id="3.10.290.10">
    <property type="entry name" value="RNA-binding S4 domain"/>
    <property type="match status" value="1"/>
</dbReference>
<dbReference type="HAMAP" id="MF_01306_B">
    <property type="entry name" value="Ribosomal_uS4_B"/>
    <property type="match status" value="1"/>
</dbReference>
<dbReference type="InterPro" id="IPR022801">
    <property type="entry name" value="Ribosomal_uS4"/>
</dbReference>
<dbReference type="InterPro" id="IPR005709">
    <property type="entry name" value="Ribosomal_uS4_bac-type"/>
</dbReference>
<dbReference type="InterPro" id="IPR018079">
    <property type="entry name" value="Ribosomal_uS4_CS"/>
</dbReference>
<dbReference type="InterPro" id="IPR001912">
    <property type="entry name" value="Ribosomal_uS4_N"/>
</dbReference>
<dbReference type="InterPro" id="IPR002942">
    <property type="entry name" value="S4_RNA-bd"/>
</dbReference>
<dbReference type="InterPro" id="IPR036986">
    <property type="entry name" value="S4_RNA-bd_sf"/>
</dbReference>
<dbReference type="NCBIfam" id="NF003717">
    <property type="entry name" value="PRK05327.1"/>
    <property type="match status" value="1"/>
</dbReference>
<dbReference type="NCBIfam" id="TIGR01017">
    <property type="entry name" value="rpsD_bact"/>
    <property type="match status" value="1"/>
</dbReference>
<dbReference type="PANTHER" id="PTHR11831">
    <property type="entry name" value="30S 40S RIBOSOMAL PROTEIN"/>
    <property type="match status" value="1"/>
</dbReference>
<dbReference type="PANTHER" id="PTHR11831:SF4">
    <property type="entry name" value="SMALL RIBOSOMAL SUBUNIT PROTEIN US4M"/>
    <property type="match status" value="1"/>
</dbReference>
<dbReference type="Pfam" id="PF00163">
    <property type="entry name" value="Ribosomal_S4"/>
    <property type="match status" value="1"/>
</dbReference>
<dbReference type="Pfam" id="PF01479">
    <property type="entry name" value="S4"/>
    <property type="match status" value="1"/>
</dbReference>
<dbReference type="SMART" id="SM01390">
    <property type="entry name" value="Ribosomal_S4"/>
    <property type="match status" value="1"/>
</dbReference>
<dbReference type="SMART" id="SM00363">
    <property type="entry name" value="S4"/>
    <property type="match status" value="1"/>
</dbReference>
<dbReference type="SUPFAM" id="SSF55174">
    <property type="entry name" value="Alpha-L RNA-binding motif"/>
    <property type="match status" value="1"/>
</dbReference>
<dbReference type="PROSITE" id="PS00632">
    <property type="entry name" value="RIBOSOMAL_S4"/>
    <property type="match status" value="1"/>
</dbReference>
<dbReference type="PROSITE" id="PS50889">
    <property type="entry name" value="S4"/>
    <property type="match status" value="1"/>
</dbReference>